<accession>Q06340</accession>
<accession>D6VSZ1</accession>
<dbReference type="EMBL" id="U28372">
    <property type="protein sequence ID" value="AAB64797.1"/>
    <property type="molecule type" value="Genomic_DNA"/>
</dbReference>
<dbReference type="EMBL" id="BK006938">
    <property type="protein sequence ID" value="DAA12201.1"/>
    <property type="molecule type" value="Genomic_DNA"/>
</dbReference>
<dbReference type="PIR" id="S61158">
    <property type="entry name" value="S61158"/>
</dbReference>
<dbReference type="RefSeq" id="NP_010650.1">
    <property type="nucleotide sequence ID" value="NM_001180671.1"/>
</dbReference>
<dbReference type="BioGRID" id="32418">
    <property type="interactions" value="283"/>
</dbReference>
<dbReference type="ComplexPortal" id="CPX-1166">
    <property type="entry name" value="CUL8-MMS1-ESC2 E3 ubiquitin ligase complex"/>
</dbReference>
<dbReference type="DIP" id="DIP-5219N"/>
<dbReference type="FunCoup" id="Q06340">
    <property type="interactions" value="61"/>
</dbReference>
<dbReference type="IntAct" id="Q06340">
    <property type="interactions" value="4"/>
</dbReference>
<dbReference type="STRING" id="4932.YDR363W"/>
<dbReference type="iPTMnet" id="Q06340"/>
<dbReference type="PaxDb" id="4932-YDR363W"/>
<dbReference type="PeptideAtlas" id="Q06340"/>
<dbReference type="EnsemblFungi" id="YDR363W_mRNA">
    <property type="protein sequence ID" value="YDR363W"/>
    <property type="gene ID" value="YDR363W"/>
</dbReference>
<dbReference type="GeneID" id="851965"/>
<dbReference type="KEGG" id="sce:YDR363W"/>
<dbReference type="AGR" id="SGD:S000002771"/>
<dbReference type="SGD" id="S000002771">
    <property type="gene designation" value="ESC2"/>
</dbReference>
<dbReference type="VEuPathDB" id="FungiDB:YDR363W"/>
<dbReference type="eggNOG" id="ENOG502QS09">
    <property type="taxonomic scope" value="Eukaryota"/>
</dbReference>
<dbReference type="HOGENOM" id="CLU_048318_0_0_1"/>
<dbReference type="InParanoid" id="Q06340"/>
<dbReference type="OMA" id="NFMTCNS"/>
<dbReference type="OrthoDB" id="3365399at2759"/>
<dbReference type="BioCyc" id="YEAST:G3O-29913-MONOMER"/>
<dbReference type="BioGRID-ORCS" id="851965">
    <property type="hits" value="0 hits in 10 CRISPR screens"/>
</dbReference>
<dbReference type="PRO" id="PR:Q06340"/>
<dbReference type="Proteomes" id="UP000002311">
    <property type="component" value="Chromosome IV"/>
</dbReference>
<dbReference type="RNAct" id="Q06340">
    <property type="molecule type" value="protein"/>
</dbReference>
<dbReference type="GO" id="GO:0035361">
    <property type="term" value="C:Cul8-RING ubiquitin ligase complex"/>
    <property type="evidence" value="ECO:0000303"/>
    <property type="project" value="ComplexPortal"/>
</dbReference>
<dbReference type="GO" id="GO:0005737">
    <property type="term" value="C:cytoplasm"/>
    <property type="evidence" value="ECO:0007669"/>
    <property type="project" value="UniProtKB-SubCell"/>
</dbReference>
<dbReference type="GO" id="GO:0005634">
    <property type="term" value="C:nucleus"/>
    <property type="evidence" value="ECO:0000314"/>
    <property type="project" value="SGD"/>
</dbReference>
<dbReference type="GO" id="GO:0070336">
    <property type="term" value="F:flap-structured DNA binding"/>
    <property type="evidence" value="ECO:0000314"/>
    <property type="project" value="SGD"/>
</dbReference>
<dbReference type="GO" id="GO:0000400">
    <property type="term" value="F:four-way junction DNA binding"/>
    <property type="evidence" value="ECO:0000314"/>
    <property type="project" value="SGD"/>
</dbReference>
<dbReference type="GO" id="GO:0180016">
    <property type="term" value="F:SUMO ligase regulator activity"/>
    <property type="evidence" value="ECO:0000314"/>
    <property type="project" value="SGD"/>
</dbReference>
<dbReference type="GO" id="GO:0000403">
    <property type="term" value="F:Y-form DNA binding"/>
    <property type="evidence" value="ECO:0000314"/>
    <property type="project" value="SGD"/>
</dbReference>
<dbReference type="GO" id="GO:0000724">
    <property type="term" value="P:double-strand break repair via homologous recombination"/>
    <property type="evidence" value="ECO:0000315"/>
    <property type="project" value="SGD"/>
</dbReference>
<dbReference type="GO" id="GO:0031507">
    <property type="term" value="P:heterochromatin formation"/>
    <property type="evidence" value="ECO:0000303"/>
    <property type="project" value="ComplexPortal"/>
</dbReference>
<dbReference type="GO" id="GO:0031573">
    <property type="term" value="P:mitotic intra-S DNA damage checkpoint signaling"/>
    <property type="evidence" value="ECO:0000315"/>
    <property type="project" value="SGD"/>
</dbReference>
<dbReference type="GO" id="GO:0007064">
    <property type="term" value="P:mitotic sister chromatid cohesion"/>
    <property type="evidence" value="ECO:0000315"/>
    <property type="project" value="SGD"/>
</dbReference>
<dbReference type="GO" id="GO:0033235">
    <property type="term" value="P:positive regulation of protein sumoylation"/>
    <property type="evidence" value="ECO:0000314"/>
    <property type="project" value="SGD"/>
</dbReference>
<dbReference type="GO" id="GO:0030466">
    <property type="term" value="P:silent mating-type cassette heterochromatin formation"/>
    <property type="evidence" value="ECO:0000315"/>
    <property type="project" value="SGD"/>
</dbReference>
<dbReference type="CDD" id="cd17080">
    <property type="entry name" value="Ubl_SLD2_Esc2_like"/>
    <property type="match status" value="1"/>
</dbReference>
<dbReference type="Gene3D" id="3.10.20.90">
    <property type="entry name" value="Phosphatidylinositol 3-kinase Catalytic Subunit, Chain A, domain 1"/>
    <property type="match status" value="1"/>
</dbReference>
<dbReference type="InterPro" id="IPR022617">
    <property type="entry name" value="Rad60/SUMO-like_dom"/>
</dbReference>
<dbReference type="InterPro" id="IPR000626">
    <property type="entry name" value="Ubiquitin-like_dom"/>
</dbReference>
<dbReference type="InterPro" id="IPR029071">
    <property type="entry name" value="Ubiquitin-like_domsf"/>
</dbReference>
<dbReference type="Pfam" id="PF11976">
    <property type="entry name" value="Rad60-SLD"/>
    <property type="match status" value="1"/>
</dbReference>
<dbReference type="SUPFAM" id="SSF54236">
    <property type="entry name" value="Ubiquitin-like"/>
    <property type="match status" value="1"/>
</dbReference>
<dbReference type="PROSITE" id="PS50053">
    <property type="entry name" value="UBIQUITIN_2"/>
    <property type="match status" value="1"/>
</dbReference>
<protein>
    <recommendedName>
        <fullName>Protein ESC2</fullName>
    </recommendedName>
    <alternativeName>
        <fullName>Establishes silent chromatin protein 2</fullName>
    </alternativeName>
</protein>
<keyword id="KW-0175">Coiled coil</keyword>
<keyword id="KW-0963">Cytoplasm</keyword>
<keyword id="KW-0539">Nucleus</keyword>
<keyword id="KW-0597">Phosphoprotein</keyword>
<keyword id="KW-1185">Reference proteome</keyword>
<keyword id="KW-0677">Repeat</keyword>
<keyword id="KW-0678">Repressor</keyword>
<keyword id="KW-0804">Transcription</keyword>
<keyword id="KW-0805">Transcription regulation</keyword>
<sequence length="456" mass="52542">MTGDSRSISEPSINLDPDNTSFSDENSDDFFMDNSYDIDEIDHSDESNRQSVIVDSKVTVPPSKHSTLTLSDSEDSDAKEQHQSLSRSSSKNVNIEDITEPKPDKPSGRTRGRSVMKESVVEINSSESDLDEDKNFPRSRSRSRSSIRSISPAGKYKRQKSSLLYTYDENDDFFKELAKEAKKSTTISKESTPDQRKRVYNIKFLSKLEGTINKAVQVKVLGKYEFSKILPAALDGLMKSYKIPKVMKDIYKVENVTLYWNNAKLLTFMTCNSLHIPQDFENEVSDIDVTIVSKEYEKNFEATLESKLKEEEAALLIKERQEMERKLEKKRNEQEESEYREFESELKNVEETQEIKENDTVMNTKLLQEGGSLSGNSSSMEEVMRIALMGQDNKKIYVHVRRSTPFSKIAEYYRIQKQLPQKTRVKLLFDHDELDMNECIADQDMEDEDMVDVIID</sequence>
<organism>
    <name type="scientific">Saccharomyces cerevisiae (strain ATCC 204508 / S288c)</name>
    <name type="common">Baker's yeast</name>
    <dbReference type="NCBI Taxonomy" id="559292"/>
    <lineage>
        <taxon>Eukaryota</taxon>
        <taxon>Fungi</taxon>
        <taxon>Dikarya</taxon>
        <taxon>Ascomycota</taxon>
        <taxon>Saccharomycotina</taxon>
        <taxon>Saccharomycetes</taxon>
        <taxon>Saccharomycetales</taxon>
        <taxon>Saccharomycetaceae</taxon>
        <taxon>Saccharomyces</taxon>
    </lineage>
</organism>
<evidence type="ECO:0000255" key="1"/>
<evidence type="ECO:0000256" key="2">
    <source>
        <dbReference type="SAM" id="MobiDB-lite"/>
    </source>
</evidence>
<evidence type="ECO:0000269" key="3">
    <source>
    </source>
</evidence>
<evidence type="ECO:0000269" key="4">
    <source>
    </source>
</evidence>
<evidence type="ECO:0000269" key="5">
    <source>
    </source>
</evidence>
<evidence type="ECO:0000269" key="6">
    <source>
    </source>
</evidence>
<evidence type="ECO:0000269" key="7">
    <source>
    </source>
</evidence>
<evidence type="ECO:0007744" key="8">
    <source>
    </source>
</evidence>
<feature type="chain" id="PRO_0000227693" description="Protein ESC2">
    <location>
        <begin position="1"/>
        <end position="456"/>
    </location>
</feature>
<feature type="repeat" description="SUMO-like region 1">
    <location>
        <begin position="169"/>
        <end position="287"/>
    </location>
</feature>
<feature type="repeat" description="SUMO-like region 2">
    <location>
        <begin position="380"/>
        <end position="456"/>
    </location>
</feature>
<feature type="region of interest" description="Disordered" evidence="2">
    <location>
        <begin position="1"/>
        <end position="154"/>
    </location>
</feature>
<feature type="coiled-coil region" evidence="1">
    <location>
        <begin position="301"/>
        <end position="360"/>
    </location>
</feature>
<feature type="compositionally biased region" description="Polar residues" evidence="2">
    <location>
        <begin position="1"/>
        <end position="24"/>
    </location>
</feature>
<feature type="compositionally biased region" description="Acidic residues" evidence="2">
    <location>
        <begin position="25"/>
        <end position="43"/>
    </location>
</feature>
<feature type="compositionally biased region" description="Polar residues" evidence="2">
    <location>
        <begin position="83"/>
        <end position="93"/>
    </location>
</feature>
<feature type="modified residue" description="Phosphoserine" evidence="8">
    <location>
        <position position="90"/>
    </location>
</feature>
<feature type="modified residue" description="Phosphoserine" evidence="8">
    <location>
        <position position="125"/>
    </location>
</feature>
<feature type="modified residue" description="Phosphoserine" evidence="8">
    <location>
        <position position="126"/>
    </location>
</feature>
<comment type="function">
    <text evidence="3 4">May be a substrate targeting component of a cullin-RING-based E3 ubiquitin-protein ligase complex RTT101(MMS1-ESC2). Involved in HMR and telomere silencing via the recruitment or stabilizing of the SIR (silent information regulators) complex.</text>
</comment>
<comment type="subunit">
    <text evidence="4 7">Component of a cullin-RING ligase (CRL)-like complex composed of at least the cullin RTT101, a linker protein MMS1, and the potential substrate receptor ESC2. Interacts with RTT101 and MMS1. Interacts with SIR2.</text>
</comment>
<comment type="interaction">
    <interactant intactId="EBI-33799">
        <id>Q06340</id>
    </interactant>
    <interactant intactId="EBI-38894">
        <id>Q06211</id>
        <label>MMS1</label>
    </interactant>
    <organismsDiffer>false</organismsDiffer>
    <experiments>5</experiments>
</comment>
<comment type="interaction">
    <interactant intactId="EBI-33799">
        <id>Q06340</id>
    </interactant>
    <interactant intactId="EBI-25861">
        <id>P47050</id>
        <label>RTT101</label>
    </interactant>
    <organismsDiffer>false</organismsDiffer>
    <experiments>4</experiments>
</comment>
<comment type="subcellular location">
    <subcellularLocation>
        <location>Cytoplasm</location>
    </subcellularLocation>
    <subcellularLocation>
        <location>Nucleus</location>
    </subcellularLocation>
</comment>
<comment type="domain">
    <text evidence="6">The 2 SUMO-like regions, although related to ubiquitin domains lack the conserved acceptor Gly residue in position 456.</text>
</comment>
<comment type="miscellaneous">
    <text evidence="5">Present with 1890 molecules/cell in log phase SD medium.</text>
</comment>
<name>ESC2_YEAST</name>
<reference key="1">
    <citation type="journal article" date="1997" name="Nature">
        <title>The nucleotide sequence of Saccharomyces cerevisiae chromosome IV.</title>
        <authorList>
            <person name="Jacq C."/>
            <person name="Alt-Moerbe J."/>
            <person name="Andre B."/>
            <person name="Arnold W."/>
            <person name="Bahr A."/>
            <person name="Ballesta J.P.G."/>
            <person name="Bargues M."/>
            <person name="Baron L."/>
            <person name="Becker A."/>
            <person name="Biteau N."/>
            <person name="Bloecker H."/>
            <person name="Blugeon C."/>
            <person name="Boskovic J."/>
            <person name="Brandt P."/>
            <person name="Brueckner M."/>
            <person name="Buitrago M.J."/>
            <person name="Coster F."/>
            <person name="Delaveau T."/>
            <person name="del Rey F."/>
            <person name="Dujon B."/>
            <person name="Eide L.G."/>
            <person name="Garcia-Cantalejo J.M."/>
            <person name="Goffeau A."/>
            <person name="Gomez-Peris A."/>
            <person name="Granotier C."/>
            <person name="Hanemann V."/>
            <person name="Hankeln T."/>
            <person name="Hoheisel J.D."/>
            <person name="Jaeger W."/>
            <person name="Jimenez A."/>
            <person name="Jonniaux J.-L."/>
            <person name="Kraemer C."/>
            <person name="Kuester H."/>
            <person name="Laamanen P."/>
            <person name="Legros Y."/>
            <person name="Louis E.J."/>
            <person name="Moeller-Rieker S."/>
            <person name="Monnet A."/>
            <person name="Moro M."/>
            <person name="Mueller-Auer S."/>
            <person name="Nussbaumer B."/>
            <person name="Paricio N."/>
            <person name="Paulin L."/>
            <person name="Perea J."/>
            <person name="Perez-Alonso M."/>
            <person name="Perez-Ortin J.E."/>
            <person name="Pohl T.M."/>
            <person name="Prydz H."/>
            <person name="Purnelle B."/>
            <person name="Rasmussen S.W."/>
            <person name="Remacha M.A."/>
            <person name="Revuelta J.L."/>
            <person name="Rieger M."/>
            <person name="Salom D."/>
            <person name="Saluz H.P."/>
            <person name="Saiz J.E."/>
            <person name="Saren A.-M."/>
            <person name="Schaefer M."/>
            <person name="Scharfe M."/>
            <person name="Schmidt E.R."/>
            <person name="Schneider C."/>
            <person name="Scholler P."/>
            <person name="Schwarz S."/>
            <person name="Soler-Mira A."/>
            <person name="Urrestarazu L.A."/>
            <person name="Verhasselt P."/>
            <person name="Vissers S."/>
            <person name="Voet M."/>
            <person name="Volckaert G."/>
            <person name="Wagner G."/>
            <person name="Wambutt R."/>
            <person name="Wedler E."/>
            <person name="Wedler H."/>
            <person name="Woelfl S."/>
            <person name="Harris D.E."/>
            <person name="Bowman S."/>
            <person name="Brown D."/>
            <person name="Churcher C.M."/>
            <person name="Connor R."/>
            <person name="Dedman K."/>
            <person name="Gentles S."/>
            <person name="Hamlin N."/>
            <person name="Hunt S."/>
            <person name="Jones L."/>
            <person name="McDonald S."/>
            <person name="Murphy L.D."/>
            <person name="Niblett D."/>
            <person name="Odell C."/>
            <person name="Oliver K."/>
            <person name="Rajandream M.A."/>
            <person name="Richards C."/>
            <person name="Shore L."/>
            <person name="Walsh S.V."/>
            <person name="Barrell B.G."/>
            <person name="Dietrich F.S."/>
            <person name="Mulligan J.T."/>
            <person name="Allen E."/>
            <person name="Araujo R."/>
            <person name="Aviles E."/>
            <person name="Berno A."/>
            <person name="Carpenter J."/>
            <person name="Chen E."/>
            <person name="Cherry J.M."/>
            <person name="Chung E."/>
            <person name="Duncan M."/>
            <person name="Hunicke-Smith S."/>
            <person name="Hyman R.W."/>
            <person name="Komp C."/>
            <person name="Lashkari D."/>
            <person name="Lew H."/>
            <person name="Lin D."/>
            <person name="Mosedale D."/>
            <person name="Nakahara K."/>
            <person name="Namath A."/>
            <person name="Oefner P."/>
            <person name="Oh C."/>
            <person name="Petel F.X."/>
            <person name="Roberts D."/>
            <person name="Schramm S."/>
            <person name="Schroeder M."/>
            <person name="Shogren T."/>
            <person name="Shroff N."/>
            <person name="Winant A."/>
            <person name="Yelton M.A."/>
            <person name="Botstein D."/>
            <person name="Davis R.W."/>
            <person name="Johnston M."/>
            <person name="Andrews S."/>
            <person name="Brinkman R."/>
            <person name="Cooper J."/>
            <person name="Ding H."/>
            <person name="Du Z."/>
            <person name="Favello A."/>
            <person name="Fulton L."/>
            <person name="Gattung S."/>
            <person name="Greco T."/>
            <person name="Hallsworth K."/>
            <person name="Hawkins J."/>
            <person name="Hillier L.W."/>
            <person name="Jier M."/>
            <person name="Johnson D."/>
            <person name="Johnston L."/>
            <person name="Kirsten J."/>
            <person name="Kucaba T."/>
            <person name="Langston Y."/>
            <person name="Latreille P."/>
            <person name="Le T."/>
            <person name="Mardis E."/>
            <person name="Menezes S."/>
            <person name="Miller N."/>
            <person name="Nhan M."/>
            <person name="Pauley A."/>
            <person name="Peluso D."/>
            <person name="Rifkin L."/>
            <person name="Riles L."/>
            <person name="Taich A."/>
            <person name="Trevaskis E."/>
            <person name="Vignati D."/>
            <person name="Wilcox L."/>
            <person name="Wohldman P."/>
            <person name="Vaudin M."/>
            <person name="Wilson R."/>
            <person name="Waterston R."/>
            <person name="Albermann K."/>
            <person name="Hani J."/>
            <person name="Heumann K."/>
            <person name="Kleine K."/>
            <person name="Mewes H.-W."/>
            <person name="Zollner A."/>
            <person name="Zaccaria P."/>
        </authorList>
    </citation>
    <scope>NUCLEOTIDE SEQUENCE [LARGE SCALE GENOMIC DNA]</scope>
    <source>
        <strain>ATCC 204508 / S288c</strain>
    </source>
</reference>
<reference key="2">
    <citation type="journal article" date="2014" name="G3 (Bethesda)">
        <title>The reference genome sequence of Saccharomyces cerevisiae: Then and now.</title>
        <authorList>
            <person name="Engel S.R."/>
            <person name="Dietrich F.S."/>
            <person name="Fisk D.G."/>
            <person name="Binkley G."/>
            <person name="Balakrishnan R."/>
            <person name="Costanzo M.C."/>
            <person name="Dwight S.S."/>
            <person name="Hitz B.C."/>
            <person name="Karra K."/>
            <person name="Nash R.S."/>
            <person name="Weng S."/>
            <person name="Wong E.D."/>
            <person name="Lloyd P."/>
            <person name="Skrzypek M.S."/>
            <person name="Miyasato S.R."/>
            <person name="Simison M."/>
            <person name="Cherry J.M."/>
        </authorList>
    </citation>
    <scope>GENOME REANNOTATION</scope>
    <source>
        <strain>ATCC 204508 / S288c</strain>
    </source>
</reference>
<reference key="3">
    <citation type="journal article" date="2000" name="Mol. Cell">
        <title>A histone variant, Htz1p, and a Sir1p-like protein, Esc2p, mediate silencing at HMR.</title>
        <authorList>
            <person name="Dhillon N."/>
            <person name="Kamakaka R.T."/>
        </authorList>
    </citation>
    <scope>FUNCTION</scope>
    <scope>SUBCELLULAR LOCATION</scope>
</reference>
<reference key="4">
    <citation type="journal article" date="2002" name="Genetics">
        <title>Restoration of silencing in Saccharomyces cerevisiae by tethering of a novel Sir2-interacting protein, Esc8.</title>
        <authorList>
            <person name="Cuperus G."/>
            <person name="Shore D."/>
        </authorList>
    </citation>
    <scope>FUNCTION</scope>
    <scope>INTERACTION WITH SIR2</scope>
</reference>
<reference key="5">
    <citation type="journal article" date="2003" name="Nature">
        <title>Global analysis of protein localization in budding yeast.</title>
        <authorList>
            <person name="Huh W.-K."/>
            <person name="Falvo J.V."/>
            <person name="Gerke L.C."/>
            <person name="Carroll A.S."/>
            <person name="Howson R.W."/>
            <person name="Weissman J.S."/>
            <person name="O'Shea E.K."/>
        </authorList>
    </citation>
    <scope>SUBCELLULAR LOCATION [LARGE SCALE ANALYSIS]</scope>
</reference>
<reference key="6">
    <citation type="journal article" date="2003" name="Nature">
        <title>Global analysis of protein expression in yeast.</title>
        <authorList>
            <person name="Ghaemmaghami S."/>
            <person name="Huh W.-K."/>
            <person name="Bower K."/>
            <person name="Howson R.W."/>
            <person name="Belle A."/>
            <person name="Dephoure N."/>
            <person name="O'Shea E.K."/>
            <person name="Weissman J.S."/>
        </authorList>
    </citation>
    <scope>LEVEL OF PROTEIN EXPRESSION [LARGE SCALE ANALYSIS]</scope>
</reference>
<reference key="7">
    <citation type="journal article" date="2005" name="BMC Bioinformatics">
        <title>Proteins with two SUMO-like domains in chromatin-associated complexes: the RENi (Rad60-Esc2-NIP45) family.</title>
        <authorList>
            <person name="Novatchkova M."/>
            <person name="Bachmair A."/>
            <person name="Eisenhaber B."/>
            <person name="Eisenhaber F."/>
        </authorList>
    </citation>
    <scope>DOMAIN</scope>
</reference>
<reference key="8">
    <citation type="journal article" date="2008" name="Mol. Cell. Proteomics">
        <title>A multidimensional chromatography technology for in-depth phosphoproteome analysis.</title>
        <authorList>
            <person name="Albuquerque C.P."/>
            <person name="Smolka M.B."/>
            <person name="Payne S.H."/>
            <person name="Bafna V."/>
            <person name="Eng J."/>
            <person name="Zhou H."/>
        </authorList>
    </citation>
    <scope>IDENTIFICATION BY MASS SPECTROMETRY [LARGE SCALE ANALYSIS]</scope>
</reference>
<reference key="9">
    <citation type="journal article" date="2009" name="Science">
        <title>Global analysis of Cdk1 substrate phosphorylation sites provides insights into evolution.</title>
        <authorList>
            <person name="Holt L.J."/>
            <person name="Tuch B.B."/>
            <person name="Villen J."/>
            <person name="Johnson A.D."/>
            <person name="Gygi S.P."/>
            <person name="Morgan D.O."/>
        </authorList>
    </citation>
    <scope>PHOSPHORYLATION [LARGE SCALE ANALYSIS] AT SER-90; SER-125 AND SER-126</scope>
    <scope>IDENTIFICATION BY MASS SPECTROMETRY [LARGE SCALE ANALYSIS]</scope>
</reference>
<reference key="10">
    <citation type="journal article" date="2010" name="J. Biol. Chem.">
        <title>Cul8/Rtt101 forms a variety of protein complexes that regulate DNA damage response and transcriptional silencing.</title>
        <authorList>
            <person name="Mimura S."/>
            <person name="Yamaguchi T."/>
            <person name="Ishii S."/>
            <person name="Noro E."/>
            <person name="Katsura T."/>
            <person name="Obuse C."/>
            <person name="Kamura T."/>
        </authorList>
    </citation>
    <scope>IDENTIFICATION IN A COMPLEX WITH RTT101 AND MMS1</scope>
</reference>
<proteinExistence type="evidence at protein level"/>
<gene>
    <name type="primary">ESC2</name>
    <name type="ordered locus">YDR363W</name>
</gene>